<evidence type="ECO:0000255" key="1">
    <source>
        <dbReference type="HAMAP-Rule" id="MF_00641"/>
    </source>
</evidence>
<gene>
    <name evidence="1" type="primary">glcB</name>
    <name type="ordered locus">MUL_3055</name>
</gene>
<dbReference type="EC" id="2.3.3.9" evidence="1"/>
<dbReference type="EMBL" id="CP000325">
    <property type="protein sequence ID" value="ABL05304.1"/>
    <property type="molecule type" value="Genomic_DNA"/>
</dbReference>
<dbReference type="RefSeq" id="WP_011740916.1">
    <property type="nucleotide sequence ID" value="NC_008611.1"/>
</dbReference>
<dbReference type="SMR" id="A0PSI5"/>
<dbReference type="KEGG" id="mul:MUL_3055"/>
<dbReference type="eggNOG" id="COG2225">
    <property type="taxonomic scope" value="Bacteria"/>
</dbReference>
<dbReference type="HOGENOM" id="CLU_028446_1_0_11"/>
<dbReference type="UniPathway" id="UPA00703">
    <property type="reaction ID" value="UER00720"/>
</dbReference>
<dbReference type="Proteomes" id="UP000000765">
    <property type="component" value="Chromosome"/>
</dbReference>
<dbReference type="GO" id="GO:0005829">
    <property type="term" value="C:cytosol"/>
    <property type="evidence" value="ECO:0007669"/>
    <property type="project" value="TreeGrafter"/>
</dbReference>
<dbReference type="GO" id="GO:0000287">
    <property type="term" value="F:magnesium ion binding"/>
    <property type="evidence" value="ECO:0007669"/>
    <property type="project" value="TreeGrafter"/>
</dbReference>
<dbReference type="GO" id="GO:0004474">
    <property type="term" value="F:malate synthase activity"/>
    <property type="evidence" value="ECO:0007669"/>
    <property type="project" value="UniProtKB-UniRule"/>
</dbReference>
<dbReference type="GO" id="GO:0009436">
    <property type="term" value="P:glyoxylate catabolic process"/>
    <property type="evidence" value="ECO:0007669"/>
    <property type="project" value="TreeGrafter"/>
</dbReference>
<dbReference type="GO" id="GO:0006097">
    <property type="term" value="P:glyoxylate cycle"/>
    <property type="evidence" value="ECO:0007669"/>
    <property type="project" value="UniProtKB-UniRule"/>
</dbReference>
<dbReference type="GO" id="GO:0006099">
    <property type="term" value="P:tricarboxylic acid cycle"/>
    <property type="evidence" value="ECO:0007669"/>
    <property type="project" value="UniProtKB-KW"/>
</dbReference>
<dbReference type="CDD" id="cd00728">
    <property type="entry name" value="malate_synt_G"/>
    <property type="match status" value="1"/>
</dbReference>
<dbReference type="FunFam" id="3.20.20.360:FF:000002">
    <property type="entry name" value="Malate synthase G"/>
    <property type="match status" value="1"/>
</dbReference>
<dbReference type="Gene3D" id="3.20.20.360">
    <property type="entry name" value="Malate synthase, domain 3"/>
    <property type="match status" value="2"/>
</dbReference>
<dbReference type="Gene3D" id="1.20.1220.12">
    <property type="entry name" value="Malate synthase, domain III"/>
    <property type="match status" value="1"/>
</dbReference>
<dbReference type="HAMAP" id="MF_00641">
    <property type="entry name" value="Malate_synth_G"/>
    <property type="match status" value="1"/>
</dbReference>
<dbReference type="InterPro" id="IPR044856">
    <property type="entry name" value="Malate_synth_C_sf"/>
</dbReference>
<dbReference type="InterPro" id="IPR011076">
    <property type="entry name" value="Malate_synth_sf"/>
</dbReference>
<dbReference type="InterPro" id="IPR001465">
    <property type="entry name" value="Malate_synthase_TIM"/>
</dbReference>
<dbReference type="InterPro" id="IPR006253">
    <property type="entry name" value="Malate_synthG"/>
</dbReference>
<dbReference type="InterPro" id="IPR048355">
    <property type="entry name" value="MS_C"/>
</dbReference>
<dbReference type="InterPro" id="IPR048356">
    <property type="entry name" value="MS_N"/>
</dbReference>
<dbReference type="InterPro" id="IPR046363">
    <property type="entry name" value="MS_N_TIM-barrel_dom"/>
</dbReference>
<dbReference type="InterPro" id="IPR048357">
    <property type="entry name" value="MSG_insertion"/>
</dbReference>
<dbReference type="NCBIfam" id="TIGR01345">
    <property type="entry name" value="malate_syn_G"/>
    <property type="match status" value="1"/>
</dbReference>
<dbReference type="NCBIfam" id="NF002825">
    <property type="entry name" value="PRK02999.1"/>
    <property type="match status" value="1"/>
</dbReference>
<dbReference type="PANTHER" id="PTHR42739">
    <property type="entry name" value="MALATE SYNTHASE G"/>
    <property type="match status" value="1"/>
</dbReference>
<dbReference type="PANTHER" id="PTHR42739:SF1">
    <property type="entry name" value="MALATE SYNTHASE G"/>
    <property type="match status" value="1"/>
</dbReference>
<dbReference type="Pfam" id="PF20659">
    <property type="entry name" value="MS_C"/>
    <property type="match status" value="1"/>
</dbReference>
<dbReference type="Pfam" id="PF20656">
    <property type="entry name" value="MS_N"/>
    <property type="match status" value="1"/>
</dbReference>
<dbReference type="Pfam" id="PF01274">
    <property type="entry name" value="MS_TIM-barrel"/>
    <property type="match status" value="1"/>
</dbReference>
<dbReference type="Pfam" id="PF20658">
    <property type="entry name" value="MSG_insertion"/>
    <property type="match status" value="1"/>
</dbReference>
<dbReference type="SUPFAM" id="SSF51645">
    <property type="entry name" value="Malate synthase G"/>
    <property type="match status" value="1"/>
</dbReference>
<protein>
    <recommendedName>
        <fullName evidence="1">Malate synthase G</fullName>
        <ecNumber evidence="1">2.3.3.9</ecNumber>
    </recommendedName>
</protein>
<proteinExistence type="inferred from homology"/>
<comment type="function">
    <text evidence="1">Involved in the glycolate utilization. Catalyzes the condensation and subsequent hydrolysis of acetyl-coenzyme A (acetyl-CoA) and glyoxylate to form malate and CoA.</text>
</comment>
<comment type="catalytic activity">
    <reaction evidence="1">
        <text>glyoxylate + acetyl-CoA + H2O = (S)-malate + CoA + H(+)</text>
        <dbReference type="Rhea" id="RHEA:18181"/>
        <dbReference type="ChEBI" id="CHEBI:15377"/>
        <dbReference type="ChEBI" id="CHEBI:15378"/>
        <dbReference type="ChEBI" id="CHEBI:15589"/>
        <dbReference type="ChEBI" id="CHEBI:36655"/>
        <dbReference type="ChEBI" id="CHEBI:57287"/>
        <dbReference type="ChEBI" id="CHEBI:57288"/>
        <dbReference type="EC" id="2.3.3.9"/>
    </reaction>
</comment>
<comment type="cofactor">
    <cofactor evidence="1">
        <name>Mg(2+)</name>
        <dbReference type="ChEBI" id="CHEBI:18420"/>
    </cofactor>
</comment>
<comment type="pathway">
    <text evidence="1">Carbohydrate metabolism; glyoxylate cycle; (S)-malate from isocitrate: step 2/2.</text>
</comment>
<comment type="subunit">
    <text evidence="1">Monomer.</text>
</comment>
<comment type="subcellular location">
    <subcellularLocation>
        <location evidence="1">Cytoplasm</location>
    </subcellularLocation>
</comment>
<comment type="similarity">
    <text evidence="1">Belongs to the malate synthase family. GlcB subfamily.</text>
</comment>
<keyword id="KW-0963">Cytoplasm</keyword>
<keyword id="KW-0329">Glyoxylate bypass</keyword>
<keyword id="KW-0460">Magnesium</keyword>
<keyword id="KW-0479">Metal-binding</keyword>
<keyword id="KW-0558">Oxidation</keyword>
<keyword id="KW-0808">Transferase</keyword>
<keyword id="KW-0816">Tricarboxylic acid cycle</keyword>
<name>MASZ_MYCUA</name>
<sequence length="731" mass="79479">MTDRVSAGNLRVARVLYDFVNNEALPGTDIDQDSFWAGVDKVVTDLTPQNQDLLKTRDDLQAQIDKWHRHRVIEPLDPQAYREFLTEIGYLLPAPEDFTITTSGVDDEITTTAGPQLVVPILNARFALNAANARWGSLYDALYGTDVISESDGAEKGRGYNKVRGDKVIAYARQFLDDSVPLAGASYTDATGFKVEDGQLVVSLADTSAALADPGQFAGYTGTAENPKSILLANHGLHIEILIDPESQIGATDGAGVKDVILESAITTIMDFEDSVAAVDADDKALGYRNWLGLNRGDLSEDVTKDDKTFTRVLNTDRTYTAPHGGELTLPGRSLLFVRNVGHLMTNDAIVSDAEGAEGAPVFEGIMDALFTGLIAIHGLRSTDANGLLTNSRTGSIYIVKPKMHGPAEVAFTCELFSRVEDVLGLPQGTMKVGIMDEERRTTLNLKACIKAAADRVVFINTGFLDRTGDEIHTSMEAGPMIRKGAMKNTAWIKAYEDANVDTGLAAGFSGKAQIGKGMWAMTELMADMVEQKIAQPKAGATTAWVPSPTAATLHAMHYHKVDVFAVQKELQGKTRTSVDELLTIPLAKELAWAPEEIREEVDNNCQSILGYVVRWIDQGVGCSKVPDIHNVALMEDRATLRISSQLLANWLRHGVITSEDVRASLERMAPLVDKQNAGDPEYHAMAPNFDDSIAFLAAQDLILSGAQQPNGYTEPILHRRRRELKARAGA</sequence>
<organism>
    <name type="scientific">Mycobacterium ulcerans (strain Agy99)</name>
    <dbReference type="NCBI Taxonomy" id="362242"/>
    <lineage>
        <taxon>Bacteria</taxon>
        <taxon>Bacillati</taxon>
        <taxon>Actinomycetota</taxon>
        <taxon>Actinomycetes</taxon>
        <taxon>Mycobacteriales</taxon>
        <taxon>Mycobacteriaceae</taxon>
        <taxon>Mycobacterium</taxon>
        <taxon>Mycobacterium ulcerans group</taxon>
    </lineage>
</organism>
<feature type="chain" id="PRO_1000056911" description="Malate synthase G">
    <location>
        <begin position="1"/>
        <end position="731"/>
    </location>
</feature>
<feature type="active site" description="Proton acceptor" evidence="1">
    <location>
        <position position="339"/>
    </location>
</feature>
<feature type="active site" description="Proton donor" evidence="1">
    <location>
        <position position="637"/>
    </location>
</feature>
<feature type="binding site" evidence="1">
    <location>
        <position position="118"/>
    </location>
    <ligand>
        <name>acetyl-CoA</name>
        <dbReference type="ChEBI" id="CHEBI:57288"/>
    </ligand>
</feature>
<feature type="binding site" evidence="1">
    <location>
        <begin position="125"/>
        <end position="126"/>
    </location>
    <ligand>
        <name>acetyl-CoA</name>
        <dbReference type="ChEBI" id="CHEBI:57288"/>
    </ligand>
</feature>
<feature type="binding site" evidence="1">
    <location>
        <position position="275"/>
    </location>
    <ligand>
        <name>acetyl-CoA</name>
        <dbReference type="ChEBI" id="CHEBI:57288"/>
    </ligand>
</feature>
<feature type="binding site" evidence="1">
    <location>
        <position position="312"/>
    </location>
    <ligand>
        <name>acetyl-CoA</name>
        <dbReference type="ChEBI" id="CHEBI:57288"/>
    </ligand>
</feature>
<feature type="binding site" evidence="1">
    <location>
        <position position="339"/>
    </location>
    <ligand>
        <name>glyoxylate</name>
        <dbReference type="ChEBI" id="CHEBI:36655"/>
    </ligand>
</feature>
<feature type="binding site" evidence="1">
    <location>
        <position position="438"/>
    </location>
    <ligand>
        <name>glyoxylate</name>
        <dbReference type="ChEBI" id="CHEBI:36655"/>
    </ligand>
</feature>
<feature type="binding site" evidence="1">
    <location>
        <position position="438"/>
    </location>
    <ligand>
        <name>Mg(2+)</name>
        <dbReference type="ChEBI" id="CHEBI:18420"/>
    </ligand>
</feature>
<feature type="binding site" evidence="1">
    <location>
        <begin position="463"/>
        <end position="466"/>
    </location>
    <ligand>
        <name>glyoxylate</name>
        <dbReference type="ChEBI" id="CHEBI:36655"/>
    </ligand>
</feature>
<feature type="binding site" evidence="1">
    <location>
        <position position="466"/>
    </location>
    <ligand>
        <name>Mg(2+)</name>
        <dbReference type="ChEBI" id="CHEBI:18420"/>
    </ligand>
</feature>
<feature type="binding site" evidence="1">
    <location>
        <position position="547"/>
    </location>
    <ligand>
        <name>acetyl-CoA</name>
        <dbReference type="ChEBI" id="CHEBI:57288"/>
    </ligand>
</feature>
<feature type="modified residue" description="Cysteine sulfenic acid (-SOH)" evidence="1">
    <location>
        <position position="623"/>
    </location>
</feature>
<accession>A0PSI5</accession>
<reference key="1">
    <citation type="journal article" date="2007" name="Genome Res.">
        <title>Reductive evolution and niche adaptation inferred from the genome of Mycobacterium ulcerans, the causative agent of Buruli ulcer.</title>
        <authorList>
            <person name="Stinear T.P."/>
            <person name="Seemann T."/>
            <person name="Pidot S."/>
            <person name="Frigui W."/>
            <person name="Reysset G."/>
            <person name="Garnier T."/>
            <person name="Meurice G."/>
            <person name="Simon D."/>
            <person name="Bouchier C."/>
            <person name="Ma L."/>
            <person name="Tichit M."/>
            <person name="Porter J.L."/>
            <person name="Ryan J."/>
            <person name="Johnson P.D.R."/>
            <person name="Davies J.K."/>
            <person name="Jenkin G.A."/>
            <person name="Small P.L.C."/>
            <person name="Jones L.M."/>
            <person name="Tekaia F."/>
            <person name="Laval F."/>
            <person name="Daffe M."/>
            <person name="Parkhill J."/>
            <person name="Cole S.T."/>
        </authorList>
    </citation>
    <scope>NUCLEOTIDE SEQUENCE [LARGE SCALE GENOMIC DNA]</scope>
    <source>
        <strain>Agy99</strain>
    </source>
</reference>